<reference key="1">
    <citation type="journal article" date="1990" name="Nature">
        <title>Coexpression of two distinct muscle acetylcholine receptor alpha-subunits during development.</title>
        <authorList>
            <person name="Hartman D.S."/>
            <person name="Claudio T."/>
        </authorList>
    </citation>
    <scope>NUCLEOTIDE SEQUENCE [MRNA]</scope>
    <source>
        <tissue>Muscle</tissue>
    </source>
</reference>
<proteinExistence type="evidence at transcript level"/>
<name>ACHAA_XENLA</name>
<protein>
    <recommendedName>
        <fullName>Acetylcholine receptor subunit alpha-1-A</fullName>
    </recommendedName>
</protein>
<organism>
    <name type="scientific">Xenopus laevis</name>
    <name type="common">African clawed frog</name>
    <dbReference type="NCBI Taxonomy" id="8355"/>
    <lineage>
        <taxon>Eukaryota</taxon>
        <taxon>Metazoa</taxon>
        <taxon>Chordata</taxon>
        <taxon>Craniata</taxon>
        <taxon>Vertebrata</taxon>
        <taxon>Euteleostomi</taxon>
        <taxon>Amphibia</taxon>
        <taxon>Batrachia</taxon>
        <taxon>Anura</taxon>
        <taxon>Pipoidea</taxon>
        <taxon>Pipidae</taxon>
        <taxon>Xenopodinae</taxon>
        <taxon>Xenopus</taxon>
        <taxon>Xenopus</taxon>
    </lineage>
</organism>
<dbReference type="EMBL" id="X17244">
    <property type="protein sequence ID" value="CAA35109.1"/>
    <property type="molecule type" value="mRNA"/>
</dbReference>
<dbReference type="PIR" id="S08162">
    <property type="entry name" value="S08162"/>
</dbReference>
<dbReference type="SMR" id="P22456"/>
<dbReference type="GlyCosmos" id="P22456">
    <property type="glycosylation" value="1 site, No reported glycans"/>
</dbReference>
<dbReference type="AGR" id="Xenbase:XB-GENE-977144"/>
<dbReference type="Xenbase" id="XB-GENE-977144">
    <property type="gene designation" value="chrna1.L"/>
</dbReference>
<dbReference type="Proteomes" id="UP000186698">
    <property type="component" value="Unplaced"/>
</dbReference>
<dbReference type="GO" id="GO:0005892">
    <property type="term" value="C:acetylcholine-gated channel complex"/>
    <property type="evidence" value="ECO:0000318"/>
    <property type="project" value="GO_Central"/>
</dbReference>
<dbReference type="GO" id="GO:0043005">
    <property type="term" value="C:neuron projection"/>
    <property type="evidence" value="ECO:0000318"/>
    <property type="project" value="GO_Central"/>
</dbReference>
<dbReference type="GO" id="GO:0005886">
    <property type="term" value="C:plasma membrane"/>
    <property type="evidence" value="ECO:0000318"/>
    <property type="project" value="GO_Central"/>
</dbReference>
<dbReference type="GO" id="GO:0045211">
    <property type="term" value="C:postsynaptic membrane"/>
    <property type="evidence" value="ECO:0007669"/>
    <property type="project" value="UniProtKB-SubCell"/>
</dbReference>
<dbReference type="GO" id="GO:0045202">
    <property type="term" value="C:synapse"/>
    <property type="evidence" value="ECO:0000318"/>
    <property type="project" value="GO_Central"/>
</dbReference>
<dbReference type="GO" id="GO:0022848">
    <property type="term" value="F:acetylcholine-gated monoatomic cation-selective channel activity"/>
    <property type="evidence" value="ECO:0000318"/>
    <property type="project" value="GO_Central"/>
</dbReference>
<dbReference type="GO" id="GO:0004888">
    <property type="term" value="F:transmembrane signaling receptor activity"/>
    <property type="evidence" value="ECO:0007669"/>
    <property type="project" value="InterPro"/>
</dbReference>
<dbReference type="GO" id="GO:0095500">
    <property type="term" value="P:acetylcholine receptor signaling pathway"/>
    <property type="evidence" value="ECO:0000318"/>
    <property type="project" value="GO_Central"/>
</dbReference>
<dbReference type="GO" id="GO:0051899">
    <property type="term" value="P:membrane depolarization"/>
    <property type="evidence" value="ECO:0000318"/>
    <property type="project" value="GO_Central"/>
</dbReference>
<dbReference type="GO" id="GO:0034220">
    <property type="term" value="P:monoatomic ion transmembrane transport"/>
    <property type="evidence" value="ECO:0000318"/>
    <property type="project" value="GO_Central"/>
</dbReference>
<dbReference type="GO" id="GO:0007274">
    <property type="term" value="P:neuromuscular synaptic transmission"/>
    <property type="evidence" value="ECO:0000318"/>
    <property type="project" value="GO_Central"/>
</dbReference>
<dbReference type="GO" id="GO:0035094">
    <property type="term" value="P:response to nicotine"/>
    <property type="evidence" value="ECO:0000318"/>
    <property type="project" value="GO_Central"/>
</dbReference>
<dbReference type="GO" id="GO:0007271">
    <property type="term" value="P:synaptic transmission, cholinergic"/>
    <property type="evidence" value="ECO:0000318"/>
    <property type="project" value="GO_Central"/>
</dbReference>
<dbReference type="CDD" id="cd19014">
    <property type="entry name" value="LGIC_ECD_nAChR_A1"/>
    <property type="match status" value="1"/>
</dbReference>
<dbReference type="CDD" id="cd19064">
    <property type="entry name" value="LGIC_TM_nAChR"/>
    <property type="match status" value="1"/>
</dbReference>
<dbReference type="FunFam" id="1.20.58.390:FF:000013">
    <property type="entry name" value="Putative acetylcholine receptor subunit alpha"/>
    <property type="match status" value="1"/>
</dbReference>
<dbReference type="FunFam" id="1.20.58.390:FF:000016">
    <property type="entry name" value="Putative acetylcholine receptor subunit alpha"/>
    <property type="match status" value="1"/>
</dbReference>
<dbReference type="FunFam" id="2.70.170.10:FF:000019">
    <property type="entry name" value="Putative acetylcholine receptor subunit alpha"/>
    <property type="match status" value="1"/>
</dbReference>
<dbReference type="Gene3D" id="2.70.170.10">
    <property type="entry name" value="Neurotransmitter-gated ion-channel ligand-binding domain"/>
    <property type="match status" value="1"/>
</dbReference>
<dbReference type="Gene3D" id="1.20.58.390">
    <property type="entry name" value="Neurotransmitter-gated ion-channel transmembrane domain"/>
    <property type="match status" value="2"/>
</dbReference>
<dbReference type="InterPro" id="IPR006202">
    <property type="entry name" value="Neur_chan_lig-bd"/>
</dbReference>
<dbReference type="InterPro" id="IPR036734">
    <property type="entry name" value="Neur_chan_lig-bd_sf"/>
</dbReference>
<dbReference type="InterPro" id="IPR006201">
    <property type="entry name" value="Neur_channel"/>
</dbReference>
<dbReference type="InterPro" id="IPR036719">
    <property type="entry name" value="Neuro-gated_channel_TM_sf"/>
</dbReference>
<dbReference type="InterPro" id="IPR038050">
    <property type="entry name" value="Neuro_actylchol_rec"/>
</dbReference>
<dbReference type="InterPro" id="IPR006029">
    <property type="entry name" value="Neurotrans-gated_channel_TM"/>
</dbReference>
<dbReference type="InterPro" id="IPR018000">
    <property type="entry name" value="Neurotransmitter_ion_chnl_CS"/>
</dbReference>
<dbReference type="InterPro" id="IPR002394">
    <property type="entry name" value="Nicotinic_acetylcholine_rcpt"/>
</dbReference>
<dbReference type="NCBIfam" id="TIGR00860">
    <property type="entry name" value="LIC"/>
    <property type="match status" value="1"/>
</dbReference>
<dbReference type="PANTHER" id="PTHR18945">
    <property type="entry name" value="NEUROTRANSMITTER GATED ION CHANNEL"/>
    <property type="match status" value="1"/>
</dbReference>
<dbReference type="Pfam" id="PF02931">
    <property type="entry name" value="Neur_chan_LBD"/>
    <property type="match status" value="1"/>
</dbReference>
<dbReference type="Pfam" id="PF02932">
    <property type="entry name" value="Neur_chan_memb"/>
    <property type="match status" value="1"/>
</dbReference>
<dbReference type="PRINTS" id="PR00254">
    <property type="entry name" value="NICOTINICR"/>
</dbReference>
<dbReference type="PRINTS" id="PR00252">
    <property type="entry name" value="NRIONCHANNEL"/>
</dbReference>
<dbReference type="SUPFAM" id="SSF90112">
    <property type="entry name" value="Neurotransmitter-gated ion-channel transmembrane pore"/>
    <property type="match status" value="1"/>
</dbReference>
<dbReference type="SUPFAM" id="SSF63712">
    <property type="entry name" value="Nicotinic receptor ligand binding domain-like"/>
    <property type="match status" value="1"/>
</dbReference>
<dbReference type="PROSITE" id="PS00236">
    <property type="entry name" value="NEUROTR_ION_CHANNEL"/>
    <property type="match status" value="1"/>
</dbReference>
<keyword id="KW-1003">Cell membrane</keyword>
<keyword id="KW-1015">Disulfide bond</keyword>
<keyword id="KW-0325">Glycoprotein</keyword>
<keyword id="KW-0407">Ion channel</keyword>
<keyword id="KW-0406">Ion transport</keyword>
<keyword id="KW-1071">Ligand-gated ion channel</keyword>
<keyword id="KW-0472">Membrane</keyword>
<keyword id="KW-0628">Postsynaptic cell membrane</keyword>
<keyword id="KW-0675">Receptor</keyword>
<keyword id="KW-1185">Reference proteome</keyword>
<keyword id="KW-0732">Signal</keyword>
<keyword id="KW-0770">Synapse</keyword>
<keyword id="KW-0812">Transmembrane</keyword>
<keyword id="KW-1133">Transmembrane helix</keyword>
<keyword id="KW-0813">Transport</keyword>
<sequence length="457" mass="52458">MDFVLTRLILLFLAATIIYSSEDESRLINDLFKSYNKVVRPVKAFKDKVVVTVGLQLIQLINVNEVNQIVTTNVRLKQQWEDVHLKWDPEDYGGIKKVRIPSSDIWRPDIVLYNNADGDFAIVQETKVLLDYTGKIIWLPPAIFKSYCEMIVTYFPFDLQNCSMKLGTWTYDGTLVVINPENDRPDLSNFMESGEWYMKDYRCWKHWVYYDCCPETPYLDITYHFLLQRLPLYFIVNVVIPCLLFSFLTGLVFYLPTDSGEKITLSVSVLLSLVVFLLVIVELIPSTSSAVPLIGKYMLFTMVFVIASIVITVIVINTHHRSPSTHIMPQWLKKIFIETIPRVMFFSTMKRPAQDQHKKKIFTEDIDISDISGKLGPTAVKYQSPILKNPDVKSAIEGAKYVAETMKSDQESTKASEEWKFVAMVLDHLLLAVFMIVCIIGTLAIFAGRLIELHMQG</sequence>
<evidence type="ECO:0000250" key="1"/>
<evidence type="ECO:0000250" key="2">
    <source>
        <dbReference type="UniProtKB" id="P02708"/>
    </source>
</evidence>
<evidence type="ECO:0000250" key="3">
    <source>
        <dbReference type="UniProtKB" id="P02709"/>
    </source>
</evidence>
<evidence type="ECO:0000255" key="4"/>
<evidence type="ECO:0000305" key="5"/>
<gene>
    <name type="primary">chrna1-a</name>
</gene>
<comment type="function">
    <text evidence="2">Upon acetylcholine binding, the AChR responds by an extensive change in conformation that affects all subunits and leads to opening of an ion-conducting channel across the plasma membrane.</text>
</comment>
<comment type="catalytic activity">
    <reaction evidence="3">
        <text>K(+)(in) = K(+)(out)</text>
        <dbReference type="Rhea" id="RHEA:29463"/>
        <dbReference type="ChEBI" id="CHEBI:29103"/>
    </reaction>
</comment>
<comment type="catalytic activity">
    <reaction evidence="3">
        <text>Na(+)(in) = Na(+)(out)</text>
        <dbReference type="Rhea" id="RHEA:34963"/>
        <dbReference type="ChEBI" id="CHEBI:29101"/>
    </reaction>
</comment>
<comment type="subunit">
    <text evidence="2">One of the alpha chains that assemble within the acetylcholine receptor, a pentamer of two alpha chains, a beta, a delta, and a gamma or epsilon chains.</text>
</comment>
<comment type="subcellular location">
    <subcellularLocation>
        <location evidence="2">Postsynaptic cell membrane</location>
        <topology evidence="4">Multi-pass membrane protein</topology>
    </subcellularLocation>
    <subcellularLocation>
        <location evidence="2">Cell membrane</location>
        <topology evidence="4">Multi-pass membrane protein</topology>
    </subcellularLocation>
</comment>
<comment type="tissue specificity">
    <text>Oocytes.</text>
</comment>
<comment type="similarity">
    <text evidence="5">Belongs to the ligand-gated ion channel (TC 1.A.9) family. Acetylcholine receptor (TC 1.A.9.1) subfamily. Alpha-1/CHRNA1 sub-subfamily.</text>
</comment>
<accession>P22456</accession>
<feature type="signal peptide">
    <location>
        <begin position="1"/>
        <end position="20"/>
    </location>
</feature>
<feature type="chain" id="PRO_0000000312" description="Acetylcholine receptor subunit alpha-1-A">
    <location>
        <begin position="21"/>
        <end position="457"/>
    </location>
</feature>
<feature type="topological domain" description="Extracellular">
    <location>
        <begin position="21"/>
        <end position="230"/>
    </location>
</feature>
<feature type="transmembrane region" description="Helical">
    <location>
        <begin position="231"/>
        <end position="255"/>
    </location>
</feature>
<feature type="transmembrane region" description="Helical">
    <location>
        <begin position="263"/>
        <end position="281"/>
    </location>
</feature>
<feature type="transmembrane region" description="Helical">
    <location>
        <begin position="297"/>
        <end position="316"/>
    </location>
</feature>
<feature type="topological domain" description="Cytoplasmic">
    <location>
        <begin position="317"/>
        <end position="428"/>
    </location>
</feature>
<feature type="transmembrane region" description="Helical">
    <location>
        <begin position="429"/>
        <end position="447"/>
    </location>
</feature>
<feature type="glycosylation site" description="N-linked (GlcNAc...) asparagine" evidence="4">
    <location>
        <position position="161"/>
    </location>
</feature>
<feature type="disulfide bond" evidence="1">
    <location>
        <begin position="148"/>
        <end position="162"/>
    </location>
</feature>
<feature type="disulfide bond" description="Associated with receptor activation" evidence="1">
    <location>
        <begin position="212"/>
        <end position="213"/>
    </location>
</feature>